<organism>
    <name type="scientific">Clostridium botulinum (strain ATCC 19397 / Type A)</name>
    <dbReference type="NCBI Taxonomy" id="441770"/>
    <lineage>
        <taxon>Bacteria</taxon>
        <taxon>Bacillati</taxon>
        <taxon>Bacillota</taxon>
        <taxon>Clostridia</taxon>
        <taxon>Eubacteriales</taxon>
        <taxon>Clostridiaceae</taxon>
        <taxon>Clostridium</taxon>
    </lineage>
</organism>
<name>RIBB_CLOB1</name>
<sequence>MNESLLTQFGNSLTRVEKALENLKNGKGVLLVDDENRENEGDLIFPAETITVPQMVMLIRECSGIVCLCLTDKKVKKLGLTQMVHNNTCTYETAFTISIEAKEGVTTGVSAADRVTTILTAVKDDCKPEDLCHPGHVFPLRARAGGVLTRPGHTEGTVDLMRLAGYNPAGILCELTNPDGTMARLPQIINFAKKHNLAVLSIEDIIKYKKITT</sequence>
<comment type="function">
    <text evidence="1">Catalyzes the conversion of D-ribulose 5-phosphate to formate and 3,4-dihydroxy-2-butanone 4-phosphate.</text>
</comment>
<comment type="catalytic activity">
    <reaction evidence="1">
        <text>D-ribulose 5-phosphate = (2S)-2-hydroxy-3-oxobutyl phosphate + formate + H(+)</text>
        <dbReference type="Rhea" id="RHEA:18457"/>
        <dbReference type="ChEBI" id="CHEBI:15378"/>
        <dbReference type="ChEBI" id="CHEBI:15740"/>
        <dbReference type="ChEBI" id="CHEBI:58121"/>
        <dbReference type="ChEBI" id="CHEBI:58830"/>
        <dbReference type="EC" id="4.1.99.12"/>
    </reaction>
</comment>
<comment type="cofactor">
    <cofactor evidence="1">
        <name>Mg(2+)</name>
        <dbReference type="ChEBI" id="CHEBI:18420"/>
    </cofactor>
    <cofactor evidence="1">
        <name>Mn(2+)</name>
        <dbReference type="ChEBI" id="CHEBI:29035"/>
    </cofactor>
    <text evidence="1">Binds 2 divalent metal cations per subunit. Magnesium or manganese.</text>
</comment>
<comment type="pathway">
    <text evidence="1">Cofactor biosynthesis; riboflavin biosynthesis; 2-hydroxy-3-oxobutyl phosphate from D-ribulose 5-phosphate: step 1/1.</text>
</comment>
<comment type="subunit">
    <text evidence="1">Homodimer.</text>
</comment>
<comment type="similarity">
    <text evidence="1">Belongs to the DHBP synthase family.</text>
</comment>
<proteinExistence type="inferred from homology"/>
<accession>A7FXH7</accession>
<protein>
    <recommendedName>
        <fullName evidence="1">3,4-dihydroxy-2-butanone 4-phosphate synthase</fullName>
        <shortName evidence="1">DHBP synthase</shortName>
        <ecNumber evidence="1">4.1.99.12</ecNumber>
    </recommendedName>
</protein>
<evidence type="ECO:0000255" key="1">
    <source>
        <dbReference type="HAMAP-Rule" id="MF_00180"/>
    </source>
</evidence>
<gene>
    <name evidence="1" type="primary">ribB</name>
    <name type="ordered locus">CLB_2882</name>
</gene>
<feature type="chain" id="PRO_1000040598" description="3,4-dihydroxy-2-butanone 4-phosphate synthase">
    <location>
        <begin position="1"/>
        <end position="213"/>
    </location>
</feature>
<feature type="binding site" evidence="1">
    <location>
        <begin position="37"/>
        <end position="38"/>
    </location>
    <ligand>
        <name>D-ribulose 5-phosphate</name>
        <dbReference type="ChEBI" id="CHEBI:58121"/>
    </ligand>
</feature>
<feature type="binding site" evidence="1">
    <location>
        <position position="38"/>
    </location>
    <ligand>
        <name>Mg(2+)</name>
        <dbReference type="ChEBI" id="CHEBI:18420"/>
        <label>1</label>
    </ligand>
</feature>
<feature type="binding site" evidence="1">
    <location>
        <position position="38"/>
    </location>
    <ligand>
        <name>Mg(2+)</name>
        <dbReference type="ChEBI" id="CHEBI:18420"/>
        <label>2</label>
    </ligand>
</feature>
<feature type="binding site" evidence="1">
    <location>
        <position position="42"/>
    </location>
    <ligand>
        <name>D-ribulose 5-phosphate</name>
        <dbReference type="ChEBI" id="CHEBI:58121"/>
    </ligand>
</feature>
<feature type="binding site" evidence="1">
    <location>
        <begin position="150"/>
        <end position="154"/>
    </location>
    <ligand>
        <name>D-ribulose 5-phosphate</name>
        <dbReference type="ChEBI" id="CHEBI:58121"/>
    </ligand>
</feature>
<feature type="binding site" evidence="1">
    <location>
        <position position="153"/>
    </location>
    <ligand>
        <name>Mg(2+)</name>
        <dbReference type="ChEBI" id="CHEBI:18420"/>
        <label>2</label>
    </ligand>
</feature>
<feature type="binding site" evidence="1">
    <location>
        <position position="174"/>
    </location>
    <ligand>
        <name>D-ribulose 5-phosphate</name>
        <dbReference type="ChEBI" id="CHEBI:58121"/>
    </ligand>
</feature>
<feature type="site" description="Essential for catalytic activity" evidence="1">
    <location>
        <position position="136"/>
    </location>
</feature>
<feature type="site" description="Essential for catalytic activity" evidence="1">
    <location>
        <position position="174"/>
    </location>
</feature>
<dbReference type="EC" id="4.1.99.12" evidence="1"/>
<dbReference type="EMBL" id="CP000726">
    <property type="protein sequence ID" value="ABS33803.1"/>
    <property type="molecule type" value="Genomic_DNA"/>
</dbReference>
<dbReference type="RefSeq" id="WP_012047977.1">
    <property type="nucleotide sequence ID" value="NC_009697.1"/>
</dbReference>
<dbReference type="SMR" id="A7FXH7"/>
<dbReference type="GeneID" id="5187176"/>
<dbReference type="KEGG" id="cba:CLB_2882"/>
<dbReference type="HOGENOM" id="CLU_020273_3_0_9"/>
<dbReference type="UniPathway" id="UPA00275">
    <property type="reaction ID" value="UER00399"/>
</dbReference>
<dbReference type="GO" id="GO:0005829">
    <property type="term" value="C:cytosol"/>
    <property type="evidence" value="ECO:0007669"/>
    <property type="project" value="TreeGrafter"/>
</dbReference>
<dbReference type="GO" id="GO:0008686">
    <property type="term" value="F:3,4-dihydroxy-2-butanone-4-phosphate synthase activity"/>
    <property type="evidence" value="ECO:0007669"/>
    <property type="project" value="UniProtKB-UniRule"/>
</dbReference>
<dbReference type="GO" id="GO:0000287">
    <property type="term" value="F:magnesium ion binding"/>
    <property type="evidence" value="ECO:0007669"/>
    <property type="project" value="UniProtKB-UniRule"/>
</dbReference>
<dbReference type="GO" id="GO:0030145">
    <property type="term" value="F:manganese ion binding"/>
    <property type="evidence" value="ECO:0007669"/>
    <property type="project" value="UniProtKB-UniRule"/>
</dbReference>
<dbReference type="GO" id="GO:0009231">
    <property type="term" value="P:riboflavin biosynthetic process"/>
    <property type="evidence" value="ECO:0007669"/>
    <property type="project" value="UniProtKB-UniRule"/>
</dbReference>
<dbReference type="FunFam" id="3.90.870.10:FF:000002">
    <property type="entry name" value="3,4-dihydroxy-2-butanone 4-phosphate synthase"/>
    <property type="match status" value="1"/>
</dbReference>
<dbReference type="Gene3D" id="3.90.870.10">
    <property type="entry name" value="DHBP synthase"/>
    <property type="match status" value="1"/>
</dbReference>
<dbReference type="HAMAP" id="MF_00180">
    <property type="entry name" value="RibB"/>
    <property type="match status" value="1"/>
</dbReference>
<dbReference type="InterPro" id="IPR017945">
    <property type="entry name" value="DHBP_synth_RibB-like_a/b_dom"/>
</dbReference>
<dbReference type="InterPro" id="IPR000422">
    <property type="entry name" value="DHBP_synthase_RibB"/>
</dbReference>
<dbReference type="NCBIfam" id="TIGR00506">
    <property type="entry name" value="ribB"/>
    <property type="match status" value="1"/>
</dbReference>
<dbReference type="PANTHER" id="PTHR21327:SF38">
    <property type="entry name" value="3,4-DIHYDROXY-2-BUTANONE 4-PHOSPHATE SYNTHASE"/>
    <property type="match status" value="1"/>
</dbReference>
<dbReference type="PANTHER" id="PTHR21327">
    <property type="entry name" value="GTP CYCLOHYDROLASE II-RELATED"/>
    <property type="match status" value="1"/>
</dbReference>
<dbReference type="Pfam" id="PF00926">
    <property type="entry name" value="DHBP_synthase"/>
    <property type="match status" value="1"/>
</dbReference>
<dbReference type="SUPFAM" id="SSF55821">
    <property type="entry name" value="YrdC/RibB"/>
    <property type="match status" value="1"/>
</dbReference>
<keyword id="KW-0456">Lyase</keyword>
<keyword id="KW-0460">Magnesium</keyword>
<keyword id="KW-0464">Manganese</keyword>
<keyword id="KW-0479">Metal-binding</keyword>
<keyword id="KW-0686">Riboflavin biosynthesis</keyword>
<reference key="1">
    <citation type="journal article" date="2007" name="PLoS ONE">
        <title>Analysis of the neurotoxin complex genes in Clostridium botulinum A1-A4 and B1 strains: BoNT/A3, /Ba4 and /B1 clusters are located within plasmids.</title>
        <authorList>
            <person name="Smith T.J."/>
            <person name="Hill K.K."/>
            <person name="Foley B.T."/>
            <person name="Detter J.C."/>
            <person name="Munk A.C."/>
            <person name="Bruce D.C."/>
            <person name="Doggett N.A."/>
            <person name="Smith L.A."/>
            <person name="Marks J.D."/>
            <person name="Xie G."/>
            <person name="Brettin T.S."/>
        </authorList>
    </citation>
    <scope>NUCLEOTIDE SEQUENCE [LARGE SCALE GENOMIC DNA]</scope>
    <source>
        <strain>ATCC 19397 / Type A</strain>
    </source>
</reference>